<feature type="chain" id="PRO_0000173321" description="Chloramphenicol resistance protein">
    <location>
        <begin position="1"/>
        <end position="392"/>
    </location>
</feature>
<feature type="transmembrane region" description="Helical" evidence="1">
    <location>
        <begin position="6"/>
        <end position="26"/>
    </location>
</feature>
<feature type="transmembrane region" description="Helical" evidence="1">
    <location>
        <begin position="42"/>
        <end position="62"/>
    </location>
</feature>
<feature type="transmembrane region" description="Helical" evidence="1">
    <location>
        <begin position="71"/>
        <end position="91"/>
    </location>
</feature>
<feature type="transmembrane region" description="Helical" evidence="1">
    <location>
        <begin position="100"/>
        <end position="120"/>
    </location>
</feature>
<feature type="transmembrane region" description="Helical" evidence="1">
    <location>
        <begin position="129"/>
        <end position="149"/>
    </location>
</feature>
<feature type="transmembrane region" description="Helical" evidence="1">
    <location>
        <begin position="160"/>
        <end position="180"/>
    </location>
</feature>
<feature type="transmembrane region" description="Helical" evidence="1">
    <location>
        <begin position="205"/>
        <end position="225"/>
    </location>
</feature>
<feature type="transmembrane region" description="Helical" evidence="1">
    <location>
        <begin position="239"/>
        <end position="259"/>
    </location>
</feature>
<feature type="transmembrane region" description="Helical" evidence="1">
    <location>
        <begin position="268"/>
        <end position="288"/>
    </location>
</feature>
<feature type="transmembrane region" description="Helical" evidence="1">
    <location>
        <begin position="294"/>
        <end position="314"/>
    </location>
</feature>
<feature type="transmembrane region" description="Helical" evidence="1">
    <location>
        <begin position="332"/>
        <end position="352"/>
    </location>
</feature>
<feature type="transmembrane region" description="Helical" evidence="1">
    <location>
        <begin position="358"/>
        <end position="378"/>
    </location>
</feature>
<keyword id="KW-0046">Antibiotic resistance</keyword>
<keyword id="KW-1003">Cell membrane</keyword>
<keyword id="KW-0472">Membrane</keyword>
<keyword id="KW-0812">Transmembrane</keyword>
<keyword id="KW-1133">Transmembrane helix</keyword>
<keyword id="KW-0813">Transport</keyword>
<evidence type="ECO:0000255" key="1"/>
<evidence type="ECO:0000305" key="2"/>
<proteinExistence type="inferred from homology"/>
<protein>
    <recommendedName>
        <fullName>Chloramphenicol resistance protein</fullName>
    </recommendedName>
</protein>
<comment type="subcellular location">
    <subcellularLocation>
        <location>Cell membrane</location>
        <topology>Multi-pass membrane protein</topology>
    </subcellularLocation>
</comment>
<comment type="similarity">
    <text evidence="2">Belongs to the major facilitator superfamily.</text>
</comment>
<name>CMLR_STRLI</name>
<gene>
    <name type="primary">cmlR</name>
</gene>
<reference key="1">
    <citation type="journal article" date="1991" name="Mol. Microbiol.">
        <title>An amplifiable and deletable chloramphenicol-resistance determinant of Streptomyces lividans 1326 encodes a putative transmembrane protein.</title>
        <authorList>
            <person name="Dittrich W."/>
            <person name="Betzler M."/>
            <person name="Schrempf H."/>
        </authorList>
    </citation>
    <scope>NUCLEOTIDE SEQUENCE [GENOMIC DNA]</scope>
    <source>
        <strain>66 / 1326</strain>
    </source>
</reference>
<organism>
    <name type="scientific">Streptomyces lividans</name>
    <dbReference type="NCBI Taxonomy" id="1916"/>
    <lineage>
        <taxon>Bacteria</taxon>
        <taxon>Bacillati</taxon>
        <taxon>Actinomycetota</taxon>
        <taxon>Actinomycetes</taxon>
        <taxon>Kitasatosporales</taxon>
        <taxon>Streptomycetaceae</taxon>
        <taxon>Streptomyces</taxon>
    </lineage>
</organism>
<dbReference type="EMBL" id="X59968">
    <property type="protein sequence ID" value="CAA42594.1"/>
    <property type="molecule type" value="Genomic_DNA"/>
</dbReference>
<dbReference type="PIR" id="S18593">
    <property type="entry name" value="S18593"/>
</dbReference>
<dbReference type="SMR" id="P31141"/>
<dbReference type="CARD" id="ARO:3002690">
    <property type="molecule name" value="Sliv_cmlR"/>
    <property type="mechanism identifier" value="ARO:0010000"/>
    <property type="mechanism name" value="antibiotic efflux"/>
</dbReference>
<dbReference type="TCDB" id="2.A.1.2.32">
    <property type="family name" value="the major facilitator superfamily (mfs)"/>
</dbReference>
<dbReference type="KEGG" id="ag:CAA42594"/>
<dbReference type="GO" id="GO:0005886">
    <property type="term" value="C:plasma membrane"/>
    <property type="evidence" value="ECO:0007669"/>
    <property type="project" value="UniProtKB-SubCell"/>
</dbReference>
<dbReference type="GO" id="GO:0022857">
    <property type="term" value="F:transmembrane transporter activity"/>
    <property type="evidence" value="ECO:0007669"/>
    <property type="project" value="InterPro"/>
</dbReference>
<dbReference type="GO" id="GO:0046677">
    <property type="term" value="P:response to antibiotic"/>
    <property type="evidence" value="ECO:0007669"/>
    <property type="project" value="UniProtKB-KW"/>
</dbReference>
<dbReference type="CDD" id="cd17324">
    <property type="entry name" value="MFS_NepI_like"/>
    <property type="match status" value="1"/>
</dbReference>
<dbReference type="Gene3D" id="1.20.1250.20">
    <property type="entry name" value="MFS general substrate transporter like domains"/>
    <property type="match status" value="1"/>
</dbReference>
<dbReference type="InterPro" id="IPR011701">
    <property type="entry name" value="MFS"/>
</dbReference>
<dbReference type="InterPro" id="IPR020846">
    <property type="entry name" value="MFS_dom"/>
</dbReference>
<dbReference type="InterPro" id="IPR050189">
    <property type="entry name" value="MFS_Efflux_Transporters"/>
</dbReference>
<dbReference type="InterPro" id="IPR036259">
    <property type="entry name" value="MFS_trans_sf"/>
</dbReference>
<dbReference type="NCBIfam" id="NF033135">
    <property type="entry name" value="cmx_cmrA"/>
    <property type="match status" value="1"/>
</dbReference>
<dbReference type="PANTHER" id="PTHR43124:SF3">
    <property type="entry name" value="CHLORAMPHENICOL EFFLUX PUMP RV0191"/>
    <property type="match status" value="1"/>
</dbReference>
<dbReference type="PANTHER" id="PTHR43124">
    <property type="entry name" value="PURINE EFFLUX PUMP PBUE"/>
    <property type="match status" value="1"/>
</dbReference>
<dbReference type="Pfam" id="PF07690">
    <property type="entry name" value="MFS_1"/>
    <property type="match status" value="1"/>
</dbReference>
<dbReference type="SUPFAM" id="SSF103473">
    <property type="entry name" value="MFS general substrate transporter"/>
    <property type="match status" value="1"/>
</dbReference>
<dbReference type="PROSITE" id="PS50850">
    <property type="entry name" value="MFS"/>
    <property type="match status" value="1"/>
</dbReference>
<sequence>MPLPLYLLAVAVCAMGTSEFMLAGLVPDIASDLGVTVGTAGTLTSAFATGMIVGAPLVAALARTWPRRSSLLGFILAFAAAHAVGAGTTSFPVLVACRVVAALANAGFLAVALTTAAALVPADKQGRALAVLLSGTTVATVAGVPGGSLLGTWLGWRATFWAVAVCCLPAAFGVLKAIPAGRATAAATGGPPLRVELAALKTPRLLLAMLLGALVNAATFASFTFLAPVVTDTAGLGDLWISVALVLFGAGSFAGVTVAGRLSDRRPAQVLAVAGPLLLVGWPALAMLADRPVALLTLVFVQGALSFALGSTLITRVLYEAAGAPTMAGSYATAALNVGAAAGPLVAATTLGHTTGNLGPLWASGLLVAVALLVAFPFRTVITTAAPADATR</sequence>
<accession>P31141</accession>